<gene>
    <name evidence="1" type="primary">gatB</name>
    <name type="ordered locus">SAG1667</name>
</gene>
<proteinExistence type="inferred from homology"/>
<evidence type="ECO:0000255" key="1">
    <source>
        <dbReference type="HAMAP-Rule" id="MF_00121"/>
    </source>
</evidence>
<name>GATB_STRA5</name>
<dbReference type="EC" id="6.3.5.-" evidence="1"/>
<dbReference type="EMBL" id="AE009948">
    <property type="protein sequence ID" value="AAN00531.1"/>
    <property type="molecule type" value="Genomic_DNA"/>
</dbReference>
<dbReference type="RefSeq" id="NP_688658.1">
    <property type="nucleotide sequence ID" value="NC_004116.1"/>
</dbReference>
<dbReference type="RefSeq" id="WP_001008627.1">
    <property type="nucleotide sequence ID" value="NC_004116.1"/>
</dbReference>
<dbReference type="SMR" id="Q8DY26"/>
<dbReference type="STRING" id="208435.SAG1667"/>
<dbReference type="GeneID" id="66886513"/>
<dbReference type="KEGG" id="sag:SAG1667"/>
<dbReference type="PATRIC" id="fig|208435.3.peg.1676"/>
<dbReference type="HOGENOM" id="CLU_019240_0_0_9"/>
<dbReference type="OrthoDB" id="9804078at2"/>
<dbReference type="Proteomes" id="UP000000821">
    <property type="component" value="Chromosome"/>
</dbReference>
<dbReference type="GO" id="GO:0050566">
    <property type="term" value="F:asparaginyl-tRNA synthase (glutamine-hydrolyzing) activity"/>
    <property type="evidence" value="ECO:0007669"/>
    <property type="project" value="RHEA"/>
</dbReference>
<dbReference type="GO" id="GO:0005524">
    <property type="term" value="F:ATP binding"/>
    <property type="evidence" value="ECO:0007669"/>
    <property type="project" value="UniProtKB-KW"/>
</dbReference>
<dbReference type="GO" id="GO:0050567">
    <property type="term" value="F:glutaminyl-tRNA synthase (glutamine-hydrolyzing) activity"/>
    <property type="evidence" value="ECO:0007669"/>
    <property type="project" value="UniProtKB-UniRule"/>
</dbReference>
<dbReference type="GO" id="GO:0070681">
    <property type="term" value="P:glutaminyl-tRNAGln biosynthesis via transamidation"/>
    <property type="evidence" value="ECO:0007669"/>
    <property type="project" value="TreeGrafter"/>
</dbReference>
<dbReference type="GO" id="GO:0006412">
    <property type="term" value="P:translation"/>
    <property type="evidence" value="ECO:0007669"/>
    <property type="project" value="UniProtKB-UniRule"/>
</dbReference>
<dbReference type="FunFam" id="1.10.10.410:FF:000001">
    <property type="entry name" value="Aspartyl/glutamyl-tRNA(Asn/Gln) amidotransferase subunit B"/>
    <property type="match status" value="1"/>
</dbReference>
<dbReference type="FunFam" id="1.10.150.380:FF:000001">
    <property type="entry name" value="Aspartyl/glutamyl-tRNA(Asn/Gln) amidotransferase subunit B"/>
    <property type="match status" value="1"/>
</dbReference>
<dbReference type="Gene3D" id="1.10.10.410">
    <property type="match status" value="1"/>
</dbReference>
<dbReference type="Gene3D" id="1.10.150.380">
    <property type="entry name" value="GatB domain, N-terminal subdomain"/>
    <property type="match status" value="1"/>
</dbReference>
<dbReference type="HAMAP" id="MF_00121">
    <property type="entry name" value="GatB"/>
    <property type="match status" value="1"/>
</dbReference>
<dbReference type="InterPro" id="IPR017959">
    <property type="entry name" value="Asn/Gln-tRNA_amidoTrfase_suB/E"/>
</dbReference>
<dbReference type="InterPro" id="IPR006075">
    <property type="entry name" value="Asn/Gln-tRNA_Trfase_suB/E_cat"/>
</dbReference>
<dbReference type="InterPro" id="IPR018027">
    <property type="entry name" value="Asn/Gln_amidotransferase"/>
</dbReference>
<dbReference type="InterPro" id="IPR003789">
    <property type="entry name" value="Asn/Gln_tRNA_amidoTrase-B-like"/>
</dbReference>
<dbReference type="InterPro" id="IPR004413">
    <property type="entry name" value="GatB"/>
</dbReference>
<dbReference type="InterPro" id="IPR042114">
    <property type="entry name" value="GatB_C_1"/>
</dbReference>
<dbReference type="InterPro" id="IPR023168">
    <property type="entry name" value="GatB_Yqey_C_2"/>
</dbReference>
<dbReference type="InterPro" id="IPR017958">
    <property type="entry name" value="Gln-tRNA_amidoTrfase_suB_CS"/>
</dbReference>
<dbReference type="InterPro" id="IPR014746">
    <property type="entry name" value="Gln_synth/guanido_kin_cat_dom"/>
</dbReference>
<dbReference type="NCBIfam" id="TIGR00133">
    <property type="entry name" value="gatB"/>
    <property type="match status" value="1"/>
</dbReference>
<dbReference type="NCBIfam" id="NF004011">
    <property type="entry name" value="PRK05477.1-1"/>
    <property type="match status" value="1"/>
</dbReference>
<dbReference type="NCBIfam" id="NF004012">
    <property type="entry name" value="PRK05477.1-2"/>
    <property type="match status" value="1"/>
</dbReference>
<dbReference type="NCBIfam" id="NF004014">
    <property type="entry name" value="PRK05477.1-4"/>
    <property type="match status" value="1"/>
</dbReference>
<dbReference type="PANTHER" id="PTHR11659">
    <property type="entry name" value="GLUTAMYL-TRNA GLN AMIDOTRANSFERASE SUBUNIT B MITOCHONDRIAL AND PROKARYOTIC PET112-RELATED"/>
    <property type="match status" value="1"/>
</dbReference>
<dbReference type="PANTHER" id="PTHR11659:SF0">
    <property type="entry name" value="GLUTAMYL-TRNA(GLN) AMIDOTRANSFERASE SUBUNIT B, MITOCHONDRIAL"/>
    <property type="match status" value="1"/>
</dbReference>
<dbReference type="Pfam" id="PF02934">
    <property type="entry name" value="GatB_N"/>
    <property type="match status" value="1"/>
</dbReference>
<dbReference type="Pfam" id="PF02637">
    <property type="entry name" value="GatB_Yqey"/>
    <property type="match status" value="1"/>
</dbReference>
<dbReference type="SMART" id="SM00845">
    <property type="entry name" value="GatB_Yqey"/>
    <property type="match status" value="1"/>
</dbReference>
<dbReference type="SUPFAM" id="SSF89095">
    <property type="entry name" value="GatB/YqeY motif"/>
    <property type="match status" value="1"/>
</dbReference>
<dbReference type="SUPFAM" id="SSF55931">
    <property type="entry name" value="Glutamine synthetase/guanido kinase"/>
    <property type="match status" value="1"/>
</dbReference>
<dbReference type="PROSITE" id="PS01234">
    <property type="entry name" value="GATB"/>
    <property type="match status" value="1"/>
</dbReference>
<feature type="chain" id="PRO_0000148844" description="Aspartyl/glutamyl-tRNA(Asn/Gln) amidotransferase subunit B">
    <location>
        <begin position="1"/>
        <end position="480"/>
    </location>
</feature>
<comment type="function">
    <text evidence="1">Allows the formation of correctly charged Asn-tRNA(Asn) or Gln-tRNA(Gln) through the transamidation of misacylated Asp-tRNA(Asn) or Glu-tRNA(Gln) in organisms which lack either or both of asparaginyl-tRNA or glutaminyl-tRNA synthetases. The reaction takes place in the presence of glutamine and ATP through an activated phospho-Asp-tRNA(Asn) or phospho-Glu-tRNA(Gln).</text>
</comment>
<comment type="catalytic activity">
    <reaction evidence="1">
        <text>L-glutamyl-tRNA(Gln) + L-glutamine + ATP + H2O = L-glutaminyl-tRNA(Gln) + L-glutamate + ADP + phosphate + H(+)</text>
        <dbReference type="Rhea" id="RHEA:17521"/>
        <dbReference type="Rhea" id="RHEA-COMP:9681"/>
        <dbReference type="Rhea" id="RHEA-COMP:9684"/>
        <dbReference type="ChEBI" id="CHEBI:15377"/>
        <dbReference type="ChEBI" id="CHEBI:15378"/>
        <dbReference type="ChEBI" id="CHEBI:29985"/>
        <dbReference type="ChEBI" id="CHEBI:30616"/>
        <dbReference type="ChEBI" id="CHEBI:43474"/>
        <dbReference type="ChEBI" id="CHEBI:58359"/>
        <dbReference type="ChEBI" id="CHEBI:78520"/>
        <dbReference type="ChEBI" id="CHEBI:78521"/>
        <dbReference type="ChEBI" id="CHEBI:456216"/>
    </reaction>
</comment>
<comment type="catalytic activity">
    <reaction evidence="1">
        <text>L-aspartyl-tRNA(Asn) + L-glutamine + ATP + H2O = L-asparaginyl-tRNA(Asn) + L-glutamate + ADP + phosphate + 2 H(+)</text>
        <dbReference type="Rhea" id="RHEA:14513"/>
        <dbReference type="Rhea" id="RHEA-COMP:9674"/>
        <dbReference type="Rhea" id="RHEA-COMP:9677"/>
        <dbReference type="ChEBI" id="CHEBI:15377"/>
        <dbReference type="ChEBI" id="CHEBI:15378"/>
        <dbReference type="ChEBI" id="CHEBI:29985"/>
        <dbReference type="ChEBI" id="CHEBI:30616"/>
        <dbReference type="ChEBI" id="CHEBI:43474"/>
        <dbReference type="ChEBI" id="CHEBI:58359"/>
        <dbReference type="ChEBI" id="CHEBI:78515"/>
        <dbReference type="ChEBI" id="CHEBI:78516"/>
        <dbReference type="ChEBI" id="CHEBI:456216"/>
    </reaction>
</comment>
<comment type="subunit">
    <text evidence="1">Heterotrimer of A, B and C subunits.</text>
</comment>
<comment type="similarity">
    <text evidence="1">Belongs to the GatB/GatE family. GatB subfamily.</text>
</comment>
<protein>
    <recommendedName>
        <fullName evidence="1">Aspartyl/glutamyl-tRNA(Asn/Gln) amidotransferase subunit B</fullName>
        <shortName evidence="1">Asp/Glu-ADT subunit B</shortName>
        <ecNumber evidence="1">6.3.5.-</ecNumber>
    </recommendedName>
</protein>
<keyword id="KW-0067">ATP-binding</keyword>
<keyword id="KW-0436">Ligase</keyword>
<keyword id="KW-0547">Nucleotide-binding</keyword>
<keyword id="KW-0648">Protein biosynthesis</keyword>
<keyword id="KW-1185">Reference proteome</keyword>
<organism>
    <name type="scientific">Streptococcus agalactiae serotype V (strain ATCC BAA-611 / 2603 V/R)</name>
    <dbReference type="NCBI Taxonomy" id="208435"/>
    <lineage>
        <taxon>Bacteria</taxon>
        <taxon>Bacillati</taxon>
        <taxon>Bacillota</taxon>
        <taxon>Bacilli</taxon>
        <taxon>Lactobacillales</taxon>
        <taxon>Streptococcaceae</taxon>
        <taxon>Streptococcus</taxon>
    </lineage>
</organism>
<accession>Q8DY26</accession>
<reference key="1">
    <citation type="journal article" date="2002" name="Proc. Natl. Acad. Sci. U.S.A.">
        <title>Complete genome sequence and comparative genomic analysis of an emerging human pathogen, serotype V Streptococcus agalactiae.</title>
        <authorList>
            <person name="Tettelin H."/>
            <person name="Masignani V."/>
            <person name="Cieslewicz M.J."/>
            <person name="Eisen J.A."/>
            <person name="Peterson S.N."/>
            <person name="Wessels M.R."/>
            <person name="Paulsen I.T."/>
            <person name="Nelson K.E."/>
            <person name="Margarit I."/>
            <person name="Read T.D."/>
            <person name="Madoff L.C."/>
            <person name="Wolf A.M."/>
            <person name="Beanan M.J."/>
            <person name="Brinkac L.M."/>
            <person name="Daugherty S.C."/>
            <person name="DeBoy R.T."/>
            <person name="Durkin A.S."/>
            <person name="Kolonay J.F."/>
            <person name="Madupu R."/>
            <person name="Lewis M.R."/>
            <person name="Radune D."/>
            <person name="Fedorova N.B."/>
            <person name="Scanlan D."/>
            <person name="Khouri H.M."/>
            <person name="Mulligan S."/>
            <person name="Carty H.A."/>
            <person name="Cline R.T."/>
            <person name="Van Aken S.E."/>
            <person name="Gill J."/>
            <person name="Scarselli M."/>
            <person name="Mora M."/>
            <person name="Iacobini E.T."/>
            <person name="Brettoni C."/>
            <person name="Galli G."/>
            <person name="Mariani M."/>
            <person name="Vegni F."/>
            <person name="Maione D."/>
            <person name="Rinaudo D."/>
            <person name="Rappuoli R."/>
            <person name="Telford J.L."/>
            <person name="Kasper D.L."/>
            <person name="Grandi G."/>
            <person name="Fraser C.M."/>
        </authorList>
    </citation>
    <scope>NUCLEOTIDE SEQUENCE [LARGE SCALE GENOMIC DNA]</scope>
    <source>
        <strain>ATCC BAA-611 / 2603 V/R</strain>
    </source>
</reference>
<sequence>MNFETVIGLEVHVELNTNSKIFSPSSAHFGQEQNANTNVIDWSFPGVLPVMNKGVIDAGIKAALALNMDIHQNMHFDRKNYFYPDNPKAYQISQFDEPIGYNGWIEIELEDGTRKKIRIERAHLEEDAGKNTHGTDGYSYVDLNRQGVPLIEIVSEADMRSPEEAYAYLTALKEIIQYTGISDVKMEEGSMRVDANISLRPYGQEEFGTKAELKNLNSFNNVRKGLIHEEKRQAQVLRSGGQIQQETRRFDETTGETILMRVKEGSSDYRYFPEPDLPLFDISDEWIDQVRLELPEFPQERRAKYVSSFGLSSYDASQLTATKATSDFFEKAVAIGGDAKQVSNWLQGEVAQFLNSESKSIEEIGLTPENLVEMIGLIADGTISSKIAKKVFVHLAKNGGSAEEFVKKAGLVQISDPEVLIPIIHQVFADNEAAVIDFKSGKRNADKAFTGYLMKATKGQANPQVALKLLAQELAKLKEE</sequence>